<organism>
    <name type="scientific">Haemophilus influenzae (strain ATCC 51907 / DSM 11121 / KW20 / Rd)</name>
    <dbReference type="NCBI Taxonomy" id="71421"/>
    <lineage>
        <taxon>Bacteria</taxon>
        <taxon>Pseudomonadati</taxon>
        <taxon>Pseudomonadota</taxon>
        <taxon>Gammaproteobacteria</taxon>
        <taxon>Pasteurellales</taxon>
        <taxon>Pasteurellaceae</taxon>
        <taxon>Haemophilus</taxon>
    </lineage>
</organism>
<dbReference type="EC" id="2.7.1.48"/>
<dbReference type="EMBL" id="L42023">
    <property type="protein sequence ID" value="AAC21804.1"/>
    <property type="molecule type" value="Genomic_DNA"/>
</dbReference>
<dbReference type="PIR" id="I64049">
    <property type="entry name" value="I64049"/>
</dbReference>
<dbReference type="RefSeq" id="NP_438301.1">
    <property type="nucleotide sequence ID" value="NC_000907.1"/>
</dbReference>
<dbReference type="SMR" id="P44533"/>
<dbReference type="STRING" id="71421.HI_0132"/>
<dbReference type="EnsemblBacteria" id="AAC21804">
    <property type="protein sequence ID" value="AAC21804"/>
    <property type="gene ID" value="HI_0132"/>
</dbReference>
<dbReference type="KEGG" id="hin:HI_0132"/>
<dbReference type="PATRIC" id="fig|71421.8.peg.134"/>
<dbReference type="eggNOG" id="COG0572">
    <property type="taxonomic scope" value="Bacteria"/>
</dbReference>
<dbReference type="HOGENOM" id="CLU_021278_1_2_6"/>
<dbReference type="OrthoDB" id="9777642at2"/>
<dbReference type="PhylomeDB" id="P44533"/>
<dbReference type="BioCyc" id="HINF71421:G1GJ1-142-MONOMER"/>
<dbReference type="UniPathway" id="UPA00574">
    <property type="reaction ID" value="UER00637"/>
</dbReference>
<dbReference type="UniPathway" id="UPA00579">
    <property type="reaction ID" value="UER00640"/>
</dbReference>
<dbReference type="Proteomes" id="UP000000579">
    <property type="component" value="Chromosome"/>
</dbReference>
<dbReference type="GO" id="GO:0005737">
    <property type="term" value="C:cytoplasm"/>
    <property type="evidence" value="ECO:0000318"/>
    <property type="project" value="GO_Central"/>
</dbReference>
<dbReference type="GO" id="GO:0005524">
    <property type="term" value="F:ATP binding"/>
    <property type="evidence" value="ECO:0007669"/>
    <property type="project" value="UniProtKB-UniRule"/>
</dbReference>
<dbReference type="GO" id="GO:0043771">
    <property type="term" value="F:cytidine kinase activity"/>
    <property type="evidence" value="ECO:0000318"/>
    <property type="project" value="GO_Central"/>
</dbReference>
<dbReference type="GO" id="GO:0004849">
    <property type="term" value="F:uridine kinase activity"/>
    <property type="evidence" value="ECO:0000318"/>
    <property type="project" value="GO_Central"/>
</dbReference>
<dbReference type="GO" id="GO:0044211">
    <property type="term" value="P:CTP salvage"/>
    <property type="evidence" value="ECO:0007669"/>
    <property type="project" value="UniProtKB-UniRule"/>
</dbReference>
<dbReference type="GO" id="GO:0044206">
    <property type="term" value="P:UMP salvage"/>
    <property type="evidence" value="ECO:0007669"/>
    <property type="project" value="UniProtKB-UniRule"/>
</dbReference>
<dbReference type="CDD" id="cd02023">
    <property type="entry name" value="UMPK"/>
    <property type="match status" value="1"/>
</dbReference>
<dbReference type="Gene3D" id="3.40.50.300">
    <property type="entry name" value="P-loop containing nucleotide triphosphate hydrolases"/>
    <property type="match status" value="1"/>
</dbReference>
<dbReference type="HAMAP" id="MF_00551">
    <property type="entry name" value="Uridine_kinase"/>
    <property type="match status" value="1"/>
</dbReference>
<dbReference type="InterPro" id="IPR027417">
    <property type="entry name" value="P-loop_NTPase"/>
</dbReference>
<dbReference type="InterPro" id="IPR006083">
    <property type="entry name" value="PRK/URK"/>
</dbReference>
<dbReference type="InterPro" id="IPR026008">
    <property type="entry name" value="Uridine_kinase"/>
</dbReference>
<dbReference type="InterPro" id="IPR000764">
    <property type="entry name" value="Uridine_kinase-like"/>
</dbReference>
<dbReference type="NCBIfam" id="NF004018">
    <property type="entry name" value="PRK05480.1"/>
    <property type="match status" value="1"/>
</dbReference>
<dbReference type="NCBIfam" id="TIGR00235">
    <property type="entry name" value="udk"/>
    <property type="match status" value="1"/>
</dbReference>
<dbReference type="PANTHER" id="PTHR10285">
    <property type="entry name" value="URIDINE KINASE"/>
    <property type="match status" value="1"/>
</dbReference>
<dbReference type="Pfam" id="PF00485">
    <property type="entry name" value="PRK"/>
    <property type="match status" value="1"/>
</dbReference>
<dbReference type="PRINTS" id="PR00988">
    <property type="entry name" value="URIDINKINASE"/>
</dbReference>
<dbReference type="SUPFAM" id="SSF52540">
    <property type="entry name" value="P-loop containing nucleoside triphosphate hydrolases"/>
    <property type="match status" value="1"/>
</dbReference>
<feature type="chain" id="PRO_0000164474" description="Uridine kinase">
    <location>
        <begin position="1"/>
        <end position="213"/>
    </location>
</feature>
<feature type="binding site" evidence="2">
    <location>
        <begin position="13"/>
        <end position="20"/>
    </location>
    <ligand>
        <name>ATP</name>
        <dbReference type="ChEBI" id="CHEBI:30616"/>
    </ligand>
</feature>
<name>URK_HAEIN</name>
<sequence length="213" mass="24284">MSNPSCIIIAITGASASGKSSIASTVHKELCNELGCQEIGIITEDSYYKDQSHLEMTERVKTNYDHPNSMDRDLLIQHLKNLKNGSAVDVPVYSYVEHTRTNETTHFTPKRIVILEGILLLTDERVRQLADISVFVDTPLDICFIRRLQRDMEERGRSLQSVIDQYRATVRPMFLQFIEPSKQYADIVIPRGGKNRIAINMLKAQILHLLNQK</sequence>
<keyword id="KW-0067">ATP-binding</keyword>
<keyword id="KW-0963">Cytoplasm</keyword>
<keyword id="KW-0418">Kinase</keyword>
<keyword id="KW-0547">Nucleotide-binding</keyword>
<keyword id="KW-1185">Reference proteome</keyword>
<keyword id="KW-0808">Transferase</keyword>
<protein>
    <recommendedName>
        <fullName>Uridine kinase</fullName>
        <ecNumber>2.7.1.48</ecNumber>
    </recommendedName>
    <alternativeName>
        <fullName>Cytidine monophosphokinase</fullName>
    </alternativeName>
    <alternativeName>
        <fullName>Uridine monophosphokinase</fullName>
    </alternativeName>
</protein>
<gene>
    <name type="primary">udk</name>
    <name type="ordered locus">HI_0132</name>
</gene>
<proteinExistence type="inferred from homology"/>
<evidence type="ECO:0000250" key="1"/>
<evidence type="ECO:0000255" key="2"/>
<evidence type="ECO:0000305" key="3"/>
<comment type="catalytic activity">
    <reaction>
        <text>uridine + ATP = UMP + ADP + H(+)</text>
        <dbReference type="Rhea" id="RHEA:16825"/>
        <dbReference type="ChEBI" id="CHEBI:15378"/>
        <dbReference type="ChEBI" id="CHEBI:16704"/>
        <dbReference type="ChEBI" id="CHEBI:30616"/>
        <dbReference type="ChEBI" id="CHEBI:57865"/>
        <dbReference type="ChEBI" id="CHEBI:456216"/>
        <dbReference type="EC" id="2.7.1.48"/>
    </reaction>
</comment>
<comment type="catalytic activity">
    <reaction>
        <text>cytidine + ATP = CMP + ADP + H(+)</text>
        <dbReference type="Rhea" id="RHEA:24674"/>
        <dbReference type="ChEBI" id="CHEBI:15378"/>
        <dbReference type="ChEBI" id="CHEBI:17562"/>
        <dbReference type="ChEBI" id="CHEBI:30616"/>
        <dbReference type="ChEBI" id="CHEBI:60377"/>
        <dbReference type="ChEBI" id="CHEBI:456216"/>
        <dbReference type="EC" id="2.7.1.48"/>
    </reaction>
</comment>
<comment type="pathway">
    <text>Pyrimidine metabolism; CTP biosynthesis via salvage pathway; CTP from cytidine: step 1/3.</text>
</comment>
<comment type="pathway">
    <text>Pyrimidine metabolism; UMP biosynthesis via salvage pathway; UMP from uridine: step 1/1.</text>
</comment>
<comment type="subcellular location">
    <subcellularLocation>
        <location evidence="1">Cytoplasm</location>
    </subcellularLocation>
</comment>
<comment type="similarity">
    <text evidence="3">Belongs to the uridine kinase family.</text>
</comment>
<accession>P44533</accession>
<reference key="1">
    <citation type="journal article" date="1995" name="Science">
        <title>Whole-genome random sequencing and assembly of Haemophilus influenzae Rd.</title>
        <authorList>
            <person name="Fleischmann R.D."/>
            <person name="Adams M.D."/>
            <person name="White O."/>
            <person name="Clayton R.A."/>
            <person name="Kirkness E.F."/>
            <person name="Kerlavage A.R."/>
            <person name="Bult C.J."/>
            <person name="Tomb J.-F."/>
            <person name="Dougherty B.A."/>
            <person name="Merrick J.M."/>
            <person name="McKenney K."/>
            <person name="Sutton G.G."/>
            <person name="FitzHugh W."/>
            <person name="Fields C.A."/>
            <person name="Gocayne J.D."/>
            <person name="Scott J.D."/>
            <person name="Shirley R."/>
            <person name="Liu L.-I."/>
            <person name="Glodek A."/>
            <person name="Kelley J.M."/>
            <person name="Weidman J.F."/>
            <person name="Phillips C.A."/>
            <person name="Spriggs T."/>
            <person name="Hedblom E."/>
            <person name="Cotton M.D."/>
            <person name="Utterback T.R."/>
            <person name="Hanna M.C."/>
            <person name="Nguyen D.T."/>
            <person name="Saudek D.M."/>
            <person name="Brandon R.C."/>
            <person name="Fine L.D."/>
            <person name="Fritchman J.L."/>
            <person name="Fuhrmann J.L."/>
            <person name="Geoghagen N.S.M."/>
            <person name="Gnehm C.L."/>
            <person name="McDonald L.A."/>
            <person name="Small K.V."/>
            <person name="Fraser C.M."/>
            <person name="Smith H.O."/>
            <person name="Venter J.C."/>
        </authorList>
    </citation>
    <scope>NUCLEOTIDE SEQUENCE [LARGE SCALE GENOMIC DNA]</scope>
    <source>
        <strain>ATCC 51907 / DSM 11121 / KW20 / Rd</strain>
    </source>
</reference>